<reference key="1">
    <citation type="journal article" date="2001" name="Biochem. Biophys. Res. Commun.">
        <title>Riboflavin synthesis genes ribE, ribB, ribH, ribA reside in the lux operon of Photobacterium leiognathi.</title>
        <authorList>
            <person name="Lin J.-W."/>
            <person name="Chao Y.-F."/>
            <person name="Weng S.-F."/>
        </authorList>
    </citation>
    <scope>NUCLEOTIDE SEQUENCE [GENOMIC DNA]</scope>
    <source>
        <strain>PL741</strain>
    </source>
</reference>
<feature type="chain" id="PRO_0000134780" description="6,7-dimethyl-8-ribityllumazine synthase">
    <location>
        <begin position="1"/>
        <end position="156"/>
    </location>
</feature>
<feature type="active site" description="Proton donor" evidence="1">
    <location>
        <position position="89"/>
    </location>
</feature>
<feature type="binding site" evidence="1">
    <location>
        <position position="22"/>
    </location>
    <ligand>
        <name>5-amino-6-(D-ribitylamino)uracil</name>
        <dbReference type="ChEBI" id="CHEBI:15934"/>
    </ligand>
</feature>
<feature type="binding site" evidence="1">
    <location>
        <begin position="57"/>
        <end position="59"/>
    </location>
    <ligand>
        <name>5-amino-6-(D-ribitylamino)uracil</name>
        <dbReference type="ChEBI" id="CHEBI:15934"/>
    </ligand>
</feature>
<feature type="binding site" evidence="1">
    <location>
        <begin position="81"/>
        <end position="83"/>
    </location>
    <ligand>
        <name>5-amino-6-(D-ribitylamino)uracil</name>
        <dbReference type="ChEBI" id="CHEBI:15934"/>
    </ligand>
</feature>
<feature type="binding site" evidence="1">
    <location>
        <begin position="86"/>
        <end position="87"/>
    </location>
    <ligand>
        <name>(2S)-2-hydroxy-3-oxobutyl phosphate</name>
        <dbReference type="ChEBI" id="CHEBI:58830"/>
    </ligand>
</feature>
<feature type="binding site" evidence="1">
    <location>
        <position position="114"/>
    </location>
    <ligand>
        <name>5-amino-6-(D-ribitylamino)uracil</name>
        <dbReference type="ChEBI" id="CHEBI:15934"/>
    </ligand>
</feature>
<feature type="binding site" evidence="1">
    <location>
        <position position="128"/>
    </location>
    <ligand>
        <name>(2S)-2-hydroxy-3-oxobutyl phosphate</name>
        <dbReference type="ChEBI" id="CHEBI:58830"/>
    </ligand>
</feature>
<proteinExistence type="inferred from homology"/>
<name>RISBB_PHOLE</name>
<accession>Q93E92</accession>
<gene>
    <name evidence="1" type="primary">ribH</name>
</gene>
<dbReference type="EC" id="2.5.1.78" evidence="1"/>
<dbReference type="EMBL" id="AF364106">
    <property type="protein sequence ID" value="AAK83294.1"/>
    <property type="molecule type" value="Genomic_DNA"/>
</dbReference>
<dbReference type="SMR" id="Q93E92"/>
<dbReference type="STRING" id="553611.GCA_001557755_01574"/>
<dbReference type="BRENDA" id="2.5.1.78">
    <property type="organism ID" value="4778"/>
</dbReference>
<dbReference type="UniPathway" id="UPA00275">
    <property type="reaction ID" value="UER00404"/>
</dbReference>
<dbReference type="GO" id="GO:0005829">
    <property type="term" value="C:cytosol"/>
    <property type="evidence" value="ECO:0007669"/>
    <property type="project" value="TreeGrafter"/>
</dbReference>
<dbReference type="GO" id="GO:0009349">
    <property type="term" value="C:riboflavin synthase complex"/>
    <property type="evidence" value="ECO:0007669"/>
    <property type="project" value="InterPro"/>
</dbReference>
<dbReference type="GO" id="GO:0000906">
    <property type="term" value="F:6,7-dimethyl-8-ribityllumazine synthase activity"/>
    <property type="evidence" value="ECO:0007669"/>
    <property type="project" value="UniProtKB-UniRule"/>
</dbReference>
<dbReference type="GO" id="GO:0009231">
    <property type="term" value="P:riboflavin biosynthetic process"/>
    <property type="evidence" value="ECO:0007669"/>
    <property type="project" value="UniProtKB-UniRule"/>
</dbReference>
<dbReference type="CDD" id="cd09209">
    <property type="entry name" value="Lumazine_synthase-I"/>
    <property type="match status" value="1"/>
</dbReference>
<dbReference type="FunFam" id="3.40.50.960:FF:000001">
    <property type="entry name" value="6,7-dimethyl-8-ribityllumazine synthase"/>
    <property type="match status" value="1"/>
</dbReference>
<dbReference type="Gene3D" id="3.40.50.960">
    <property type="entry name" value="Lumazine/riboflavin synthase"/>
    <property type="match status" value="1"/>
</dbReference>
<dbReference type="HAMAP" id="MF_00178">
    <property type="entry name" value="Lumazine_synth"/>
    <property type="match status" value="1"/>
</dbReference>
<dbReference type="InterPro" id="IPR034964">
    <property type="entry name" value="LS"/>
</dbReference>
<dbReference type="InterPro" id="IPR002180">
    <property type="entry name" value="LS/RS"/>
</dbReference>
<dbReference type="InterPro" id="IPR036467">
    <property type="entry name" value="LS/RS_sf"/>
</dbReference>
<dbReference type="NCBIfam" id="TIGR00114">
    <property type="entry name" value="lumazine-synth"/>
    <property type="match status" value="1"/>
</dbReference>
<dbReference type="NCBIfam" id="NF000812">
    <property type="entry name" value="PRK00061.1-4"/>
    <property type="match status" value="1"/>
</dbReference>
<dbReference type="PANTHER" id="PTHR21058:SF0">
    <property type="entry name" value="6,7-DIMETHYL-8-RIBITYLLUMAZINE SYNTHASE"/>
    <property type="match status" value="1"/>
</dbReference>
<dbReference type="PANTHER" id="PTHR21058">
    <property type="entry name" value="6,7-DIMETHYL-8-RIBITYLLUMAZINE SYNTHASE DMRL SYNTHASE LUMAZINE SYNTHASE"/>
    <property type="match status" value="1"/>
</dbReference>
<dbReference type="Pfam" id="PF00885">
    <property type="entry name" value="DMRL_synthase"/>
    <property type="match status" value="1"/>
</dbReference>
<dbReference type="SUPFAM" id="SSF52121">
    <property type="entry name" value="Lumazine synthase"/>
    <property type="match status" value="1"/>
</dbReference>
<sequence>MNIIEGAITAPHANVAIIVSRFNSFINDSLLSGALDALQRQGLVKESNITVVRCPGAYELPLLAQQLAKKGSYDAIIALGSVIRGGTPHFEYVAGECNKGLAQIALEHQIPVAFGVLTVDSIEQAIERAGTKMGNKGAEAALSALEMINVLAEIEP</sequence>
<protein>
    <recommendedName>
        <fullName evidence="1">6,7-dimethyl-8-ribityllumazine synthase</fullName>
        <shortName evidence="1">DMRL synthase</shortName>
        <shortName evidence="1">LS</shortName>
        <shortName evidence="1">Lumazine synthase</shortName>
        <ecNumber evidence="1">2.5.1.78</ecNumber>
    </recommendedName>
</protein>
<keyword id="KW-0686">Riboflavin biosynthesis</keyword>
<keyword id="KW-0808">Transferase</keyword>
<comment type="function">
    <text evidence="1">Catalyzes the formation of 6,7-dimethyl-8-ribityllumazine by condensation of 5-amino-6-(D-ribitylamino)uracil with 3,4-dihydroxy-2-butanone 4-phosphate. This is the penultimate step in the biosynthesis of riboflavin.</text>
</comment>
<comment type="catalytic activity">
    <reaction evidence="1">
        <text>(2S)-2-hydroxy-3-oxobutyl phosphate + 5-amino-6-(D-ribitylamino)uracil = 6,7-dimethyl-8-(1-D-ribityl)lumazine + phosphate + 2 H2O + H(+)</text>
        <dbReference type="Rhea" id="RHEA:26152"/>
        <dbReference type="ChEBI" id="CHEBI:15377"/>
        <dbReference type="ChEBI" id="CHEBI:15378"/>
        <dbReference type="ChEBI" id="CHEBI:15934"/>
        <dbReference type="ChEBI" id="CHEBI:43474"/>
        <dbReference type="ChEBI" id="CHEBI:58201"/>
        <dbReference type="ChEBI" id="CHEBI:58830"/>
        <dbReference type="EC" id="2.5.1.78"/>
    </reaction>
</comment>
<comment type="pathway">
    <text evidence="1">Cofactor biosynthesis; riboflavin biosynthesis; riboflavin from 2-hydroxy-3-oxobutyl phosphate and 5-amino-6-(D-ribitylamino)uracil: step 1/2.</text>
</comment>
<comment type="subunit">
    <text evidence="1">Forms an icosahedral capsid composed of 60 subunits, arranged as a dodecamer of pentamers.</text>
</comment>
<comment type="similarity">
    <text evidence="1">Belongs to the DMRL synthase family.</text>
</comment>
<evidence type="ECO:0000255" key="1">
    <source>
        <dbReference type="HAMAP-Rule" id="MF_00178"/>
    </source>
</evidence>
<organism>
    <name type="scientific">Photobacterium leiognathi</name>
    <dbReference type="NCBI Taxonomy" id="553611"/>
    <lineage>
        <taxon>Bacteria</taxon>
        <taxon>Pseudomonadati</taxon>
        <taxon>Pseudomonadota</taxon>
        <taxon>Gammaproteobacteria</taxon>
        <taxon>Vibrionales</taxon>
        <taxon>Vibrionaceae</taxon>
        <taxon>Photobacterium</taxon>
    </lineage>
</organism>